<gene>
    <name type="primary">yhhW</name>
    <name type="ordered locus">b3439</name>
    <name type="ordered locus">JW3402</name>
</gene>
<name>YHHW_ECOLI</name>
<proteinExistence type="evidence at protein level"/>
<dbReference type="EC" id="1.13.11.24"/>
<dbReference type="EMBL" id="U18997">
    <property type="protein sequence ID" value="AAA58237.1"/>
    <property type="molecule type" value="Genomic_DNA"/>
</dbReference>
<dbReference type="EMBL" id="U00096">
    <property type="protein sequence ID" value="AAC76464.1"/>
    <property type="molecule type" value="Genomic_DNA"/>
</dbReference>
<dbReference type="EMBL" id="AP009048">
    <property type="protein sequence ID" value="BAE77854.1"/>
    <property type="molecule type" value="Genomic_DNA"/>
</dbReference>
<dbReference type="PIR" id="B65140">
    <property type="entry name" value="B65140"/>
</dbReference>
<dbReference type="RefSeq" id="NP_417896.1">
    <property type="nucleotide sequence ID" value="NC_000913.3"/>
</dbReference>
<dbReference type="RefSeq" id="WP_000639811.1">
    <property type="nucleotide sequence ID" value="NZ_SSZK01000008.1"/>
</dbReference>
<dbReference type="PDB" id="1TQ5">
    <property type="method" value="X-ray"/>
    <property type="resolution" value="1.76 A"/>
    <property type="chains" value="A=1-231"/>
</dbReference>
<dbReference type="PDB" id="6UTS">
    <property type="method" value="X-ray"/>
    <property type="resolution" value="3.09 A"/>
    <property type="chains" value="A=1-231"/>
</dbReference>
<dbReference type="PDBsum" id="1TQ5"/>
<dbReference type="PDBsum" id="6UTS"/>
<dbReference type="SMR" id="P46852"/>
<dbReference type="BioGRID" id="4261175">
    <property type="interactions" value="27"/>
</dbReference>
<dbReference type="DIP" id="DIP-12356N"/>
<dbReference type="FunCoup" id="P46852">
    <property type="interactions" value="134"/>
</dbReference>
<dbReference type="IntAct" id="P46852">
    <property type="interactions" value="9"/>
</dbReference>
<dbReference type="STRING" id="511145.b3439"/>
<dbReference type="jPOST" id="P46852"/>
<dbReference type="PaxDb" id="511145-b3439"/>
<dbReference type="DNASU" id="947945"/>
<dbReference type="EnsemblBacteria" id="AAC76464">
    <property type="protein sequence ID" value="AAC76464"/>
    <property type="gene ID" value="b3439"/>
</dbReference>
<dbReference type="GeneID" id="93778548"/>
<dbReference type="GeneID" id="947945"/>
<dbReference type="KEGG" id="ecj:JW3402"/>
<dbReference type="KEGG" id="eco:b3439"/>
<dbReference type="KEGG" id="ecoc:C3026_18635"/>
<dbReference type="PATRIC" id="fig|1411691.4.peg.3290"/>
<dbReference type="EchoBASE" id="EB2777"/>
<dbReference type="eggNOG" id="COG1741">
    <property type="taxonomic scope" value="Bacteria"/>
</dbReference>
<dbReference type="HOGENOM" id="CLU_064194_2_2_6"/>
<dbReference type="InParanoid" id="P46852"/>
<dbReference type="OMA" id="HQDAWFH"/>
<dbReference type="OrthoDB" id="9780903at2"/>
<dbReference type="PhylomeDB" id="P46852"/>
<dbReference type="BioCyc" id="EcoCyc:G7756-MONOMER"/>
<dbReference type="BioCyc" id="MetaCyc:G7756-MONOMER"/>
<dbReference type="UniPathway" id="UPA00724"/>
<dbReference type="EvolutionaryTrace" id="P46852"/>
<dbReference type="PRO" id="PR:P46852"/>
<dbReference type="Proteomes" id="UP000000625">
    <property type="component" value="Chromosome"/>
</dbReference>
<dbReference type="GO" id="GO:0046872">
    <property type="term" value="F:metal ion binding"/>
    <property type="evidence" value="ECO:0007669"/>
    <property type="project" value="UniProtKB-KW"/>
</dbReference>
<dbReference type="GO" id="GO:0008127">
    <property type="term" value="F:quercetin 2,3-dioxygenase activity"/>
    <property type="evidence" value="ECO:0000314"/>
    <property type="project" value="EcoCyc"/>
</dbReference>
<dbReference type="CDD" id="cd20311">
    <property type="entry name" value="cupin_Yhhw_C"/>
    <property type="match status" value="1"/>
</dbReference>
<dbReference type="CDD" id="cd02910">
    <property type="entry name" value="cupin_Yhhw_N"/>
    <property type="match status" value="1"/>
</dbReference>
<dbReference type="FunFam" id="2.60.120.10:FF:000028">
    <property type="entry name" value="Pirin family protein"/>
    <property type="match status" value="1"/>
</dbReference>
<dbReference type="FunFam" id="2.60.120.10:FF:000021">
    <property type="entry name" value="Quercetin 2,3-dioxygenase"/>
    <property type="match status" value="1"/>
</dbReference>
<dbReference type="Gene3D" id="2.60.120.10">
    <property type="entry name" value="Jelly Rolls"/>
    <property type="match status" value="2"/>
</dbReference>
<dbReference type="InterPro" id="IPR012093">
    <property type="entry name" value="Pirin"/>
</dbReference>
<dbReference type="InterPro" id="IPR003829">
    <property type="entry name" value="Pirin_N_dom"/>
</dbReference>
<dbReference type="InterPro" id="IPR041602">
    <property type="entry name" value="Quercetinase_C"/>
</dbReference>
<dbReference type="InterPro" id="IPR014710">
    <property type="entry name" value="RmlC-like_jellyroll"/>
</dbReference>
<dbReference type="InterPro" id="IPR011051">
    <property type="entry name" value="RmlC_Cupin_sf"/>
</dbReference>
<dbReference type="PANTHER" id="PTHR43212">
    <property type="entry name" value="QUERCETIN 2,3-DIOXYGENASE"/>
    <property type="match status" value="1"/>
</dbReference>
<dbReference type="PANTHER" id="PTHR43212:SF3">
    <property type="entry name" value="QUERCETIN 2,3-DIOXYGENASE"/>
    <property type="match status" value="1"/>
</dbReference>
<dbReference type="Pfam" id="PF02678">
    <property type="entry name" value="Pirin"/>
    <property type="match status" value="1"/>
</dbReference>
<dbReference type="Pfam" id="PF17954">
    <property type="entry name" value="Pirin_C_2"/>
    <property type="match status" value="1"/>
</dbReference>
<dbReference type="PIRSF" id="PIRSF006232">
    <property type="entry name" value="Pirin"/>
    <property type="match status" value="1"/>
</dbReference>
<dbReference type="SUPFAM" id="SSF51182">
    <property type="entry name" value="RmlC-like cupins"/>
    <property type="match status" value="1"/>
</dbReference>
<keyword id="KW-0002">3D-structure</keyword>
<keyword id="KW-0186">Copper</keyword>
<keyword id="KW-0223">Dioxygenase</keyword>
<keyword id="KW-0408">Iron</keyword>
<keyword id="KW-0479">Metal-binding</keyword>
<keyword id="KW-0560">Oxidoreductase</keyword>
<keyword id="KW-1185">Reference proteome</keyword>
<keyword id="KW-0862">Zinc</keyword>
<accession>P46852</accession>
<accession>Q2M7A2</accession>
<sequence length="231" mass="26279">MIYLRKANERGHANHGWLDSWHTFSFANYYDPNFMGFSALRVINDDVIEAGQGFGTHPHKDMEILTYVLEGTVEHQDSMGNKEQVPAGEFQIMSAGTGIRHSEYNPSSTERLHLYQIWIMPEENGITPRYEQRRFDAVQGKQLVLSPDARDGSLKVHQDMELYRWALLKDEQSVHQIAAERRVWIQVVKGNVTINGVKASTSDGLAIWDEQAISIHADSDSEVLLFDLPPV</sequence>
<reference key="1">
    <citation type="journal article" date="1997" name="Science">
        <title>The complete genome sequence of Escherichia coli K-12.</title>
        <authorList>
            <person name="Blattner F.R."/>
            <person name="Plunkett G. III"/>
            <person name="Bloch C.A."/>
            <person name="Perna N.T."/>
            <person name="Burland V."/>
            <person name="Riley M."/>
            <person name="Collado-Vides J."/>
            <person name="Glasner J.D."/>
            <person name="Rode C.K."/>
            <person name="Mayhew G.F."/>
            <person name="Gregor J."/>
            <person name="Davis N.W."/>
            <person name="Kirkpatrick H.A."/>
            <person name="Goeden M.A."/>
            <person name="Rose D.J."/>
            <person name="Mau B."/>
            <person name="Shao Y."/>
        </authorList>
    </citation>
    <scope>NUCLEOTIDE SEQUENCE [LARGE SCALE GENOMIC DNA]</scope>
    <source>
        <strain>K12 / MG1655 / ATCC 47076</strain>
    </source>
</reference>
<reference key="2">
    <citation type="journal article" date="2006" name="Mol. Syst. Biol.">
        <title>Highly accurate genome sequences of Escherichia coli K-12 strains MG1655 and W3110.</title>
        <authorList>
            <person name="Hayashi K."/>
            <person name="Morooka N."/>
            <person name="Yamamoto Y."/>
            <person name="Fujita K."/>
            <person name="Isono K."/>
            <person name="Choi S."/>
            <person name="Ohtsubo E."/>
            <person name="Baba T."/>
            <person name="Wanner B.L."/>
            <person name="Mori H."/>
            <person name="Horiuchi T."/>
        </authorList>
    </citation>
    <scope>NUCLEOTIDE SEQUENCE [LARGE SCALE GENOMIC DNA]</scope>
    <source>
        <strain>K12 / W3110 / ATCC 27325 / DSM 5911</strain>
    </source>
</reference>
<reference key="3">
    <citation type="journal article" date="1999" name="Electrophoresis">
        <title>Enrichment of low abundance proteins of Escherichia coli by hydroxyapatite chromatography.</title>
        <authorList>
            <person name="Fountoulakis M."/>
            <person name="Takacs M.-F."/>
            <person name="Berndt P."/>
            <person name="Langen H."/>
            <person name="Takacs B."/>
        </authorList>
    </citation>
    <scope>IDENTIFICATION BY MASS SPECTROMETRY</scope>
    <source>
        <strain>B / BL21</strain>
    </source>
</reference>
<reference key="4">
    <citation type="journal article" date="2005" name="J. Biol. Chem.">
        <title>Structural and biochemical analysis reveal pirins to possess quercetinase activity.</title>
        <authorList>
            <person name="Adams M."/>
            <person name="Jia Z."/>
        </authorList>
    </citation>
    <scope>X-RAY CRYSTALLOGRAPHY (1.76 ANGSTROMS) IN COMPLEX WITH CADMIUM IONS</scope>
    <scope>FUNCTION</scope>
    <scope>CATALYTIC ACTIVITY</scope>
    <scope>COFACTOR</scope>
    <scope>ACTIVITY REGULATION</scope>
    <scope>DOMAIN</scope>
    <scope>METAL-BINDING</scope>
    <source>
        <strain>K12</strain>
    </source>
</reference>
<comment type="function">
    <text evidence="2">Has quercetin 2,3-dioxygenase activity in vitro. Its physiological role is unknown; however, may provide a mechanism that would avoid inhibition of key cellular proteins, such as DNA gyrase, by quercetin.</text>
</comment>
<comment type="catalytic activity">
    <reaction evidence="2">
        <text>quercetin + O2 = 2-(3,4-dihydroxybenzoyloxy)-4,6-dihydroxybenzoate + CO</text>
        <dbReference type="Rhea" id="RHEA:15381"/>
        <dbReference type="ChEBI" id="CHEBI:15379"/>
        <dbReference type="ChEBI" id="CHEBI:17245"/>
        <dbReference type="ChEBI" id="CHEBI:57628"/>
        <dbReference type="ChEBI" id="CHEBI:57694"/>
        <dbReference type="EC" id="1.13.11.24"/>
    </reaction>
</comment>
<comment type="cofactor">
    <cofactor evidence="2">
        <name>Zn(2+)</name>
        <dbReference type="ChEBI" id="CHEBI:29105"/>
    </cofactor>
    <cofactor evidence="2">
        <name>Co(2+)</name>
        <dbReference type="ChEBI" id="CHEBI:48828"/>
    </cofactor>
    <cofactor evidence="2">
        <name>Fe(2+)</name>
        <dbReference type="ChEBI" id="CHEBI:29033"/>
    </cofactor>
    <text evidence="2">Binds 1 divalent metal cation, Zn(2+), Co(2+) or Fe(2+).</text>
</comment>
<comment type="activity regulation">
    <text evidence="2">Inhibited by kojic acid, sodium diethyldithiocarbamate and 1,10-phenanthroline monohydrochloride.</text>
</comment>
<comment type="pathway">
    <text>Flavonoid metabolism; quercetin degradation.</text>
</comment>
<comment type="domain">
    <text evidence="2">Is composed of two structurally similar domains arranged face to face.</text>
</comment>
<comment type="miscellaneous">
    <text>Quercetin is a flavonoid compound synthesized by a variety of plants, including foods for human consumption.</text>
</comment>
<comment type="similarity">
    <text evidence="3">Belongs to the pirin family.</text>
</comment>
<evidence type="ECO:0000250" key="1"/>
<evidence type="ECO:0000269" key="2">
    <source>
    </source>
</evidence>
<evidence type="ECO:0000305" key="3"/>
<evidence type="ECO:0007829" key="4">
    <source>
        <dbReference type="PDB" id="1TQ5"/>
    </source>
</evidence>
<evidence type="ECO:0007829" key="5">
    <source>
        <dbReference type="PDB" id="6UTS"/>
    </source>
</evidence>
<protein>
    <recommendedName>
        <fullName>Quercetin 2,3-dioxygenase</fullName>
        <shortName>Quercetinase</shortName>
        <ecNumber>1.13.11.24</ecNumber>
    </recommendedName>
    <alternativeName>
        <fullName>Pirin-like protein YhhW</fullName>
    </alternativeName>
</protein>
<organism>
    <name type="scientific">Escherichia coli (strain K12)</name>
    <dbReference type="NCBI Taxonomy" id="83333"/>
    <lineage>
        <taxon>Bacteria</taxon>
        <taxon>Pseudomonadati</taxon>
        <taxon>Pseudomonadota</taxon>
        <taxon>Gammaproteobacteria</taxon>
        <taxon>Enterobacterales</taxon>
        <taxon>Enterobacteriaceae</taxon>
        <taxon>Escherichia</taxon>
    </lineage>
</organism>
<feature type="chain" id="PRO_0000214063" description="Quercetin 2,3-dioxygenase">
    <location>
        <begin position="1"/>
        <end position="231"/>
    </location>
</feature>
<feature type="binding site">
    <location>
        <position position="57"/>
    </location>
    <ligand>
        <name>a divalent metal cation</name>
        <dbReference type="ChEBI" id="CHEBI:60240"/>
    </ligand>
</feature>
<feature type="binding site">
    <location>
        <position position="59"/>
    </location>
    <ligand>
        <name>a divalent metal cation</name>
        <dbReference type="ChEBI" id="CHEBI:60240"/>
    </ligand>
</feature>
<feature type="binding site">
    <location>
        <position position="101"/>
    </location>
    <ligand>
        <name>a divalent metal cation</name>
        <dbReference type="ChEBI" id="CHEBI:60240"/>
    </ligand>
</feature>
<feature type="binding site" evidence="1">
    <location>
        <position position="103"/>
    </location>
    <ligand>
        <name>a divalent metal cation</name>
        <dbReference type="ChEBI" id="CHEBI:60240"/>
    </ligand>
</feature>
<feature type="strand" evidence="4">
    <location>
        <begin position="2"/>
        <end position="5"/>
    </location>
</feature>
<feature type="helix" evidence="4">
    <location>
        <begin position="7"/>
        <end position="9"/>
    </location>
</feature>
<feature type="strand" evidence="4">
    <location>
        <begin position="10"/>
        <end position="14"/>
    </location>
</feature>
<feature type="strand" evidence="4">
    <location>
        <begin position="16"/>
        <end position="24"/>
    </location>
</feature>
<feature type="strand" evidence="4">
    <location>
        <begin position="40"/>
        <end position="48"/>
    </location>
</feature>
<feature type="strand" evidence="4">
    <location>
        <begin position="53"/>
        <end position="59"/>
    </location>
</feature>
<feature type="strand" evidence="4">
    <location>
        <begin position="63"/>
        <end position="80"/>
    </location>
</feature>
<feature type="strand" evidence="4">
    <location>
        <begin position="82"/>
        <end position="86"/>
    </location>
</feature>
<feature type="strand" evidence="4">
    <location>
        <begin position="90"/>
        <end position="94"/>
    </location>
</feature>
<feature type="strand" evidence="4">
    <location>
        <begin position="99"/>
        <end position="104"/>
    </location>
</feature>
<feature type="strand" evidence="4">
    <location>
        <begin position="112"/>
        <end position="119"/>
    </location>
</feature>
<feature type="strand" evidence="5">
    <location>
        <begin position="122"/>
        <end position="125"/>
    </location>
</feature>
<feature type="strand" evidence="4">
    <location>
        <begin position="129"/>
        <end position="133"/>
    </location>
</feature>
<feature type="strand" evidence="4">
    <location>
        <begin position="139"/>
        <end position="148"/>
    </location>
</feature>
<feature type="helix" evidence="4">
    <location>
        <begin position="150"/>
        <end position="152"/>
    </location>
</feature>
<feature type="strand" evidence="4">
    <location>
        <begin position="157"/>
        <end position="159"/>
    </location>
</feature>
<feature type="strand" evidence="4">
    <location>
        <begin position="161"/>
        <end position="167"/>
    </location>
</feature>
<feature type="strand" evidence="4">
    <location>
        <begin position="172"/>
        <end position="175"/>
    </location>
</feature>
<feature type="strand" evidence="4">
    <location>
        <begin position="182"/>
        <end position="194"/>
    </location>
</feature>
<feature type="strand" evidence="4">
    <location>
        <begin position="197"/>
        <end position="200"/>
    </location>
</feature>
<feature type="strand" evidence="4">
    <location>
        <begin position="204"/>
        <end position="209"/>
    </location>
</feature>
<feature type="strand" evidence="4">
    <location>
        <begin position="213"/>
        <end position="228"/>
    </location>
</feature>